<name>Y3117_MAGMM</name>
<evidence type="ECO:0000255" key="1">
    <source>
        <dbReference type="HAMAP-Rule" id="MF_00652"/>
    </source>
</evidence>
<accession>A0LCB4</accession>
<gene>
    <name type="ordered locus">Mmc1_3117</name>
</gene>
<proteinExistence type="inferred from homology"/>
<reference key="1">
    <citation type="journal article" date="2009" name="Appl. Environ. Microbiol.">
        <title>Complete genome sequence of the chemolithoautotrophic marine magnetotactic coccus strain MC-1.</title>
        <authorList>
            <person name="Schubbe S."/>
            <person name="Williams T.J."/>
            <person name="Xie G."/>
            <person name="Kiss H.E."/>
            <person name="Brettin T.S."/>
            <person name="Martinez D."/>
            <person name="Ross C.A."/>
            <person name="Schuler D."/>
            <person name="Cox B.L."/>
            <person name="Nealson K.H."/>
            <person name="Bazylinski D.A."/>
        </authorList>
    </citation>
    <scope>NUCLEOTIDE SEQUENCE [LARGE SCALE GENOMIC DNA]</scope>
    <source>
        <strain>ATCC BAA-1437 / JCM 17883 / MC-1</strain>
    </source>
</reference>
<organism>
    <name type="scientific">Magnetococcus marinus (strain ATCC BAA-1437 / JCM 17883 / MC-1)</name>
    <dbReference type="NCBI Taxonomy" id="156889"/>
    <lineage>
        <taxon>Bacteria</taxon>
        <taxon>Pseudomonadati</taxon>
        <taxon>Pseudomonadota</taxon>
        <taxon>Alphaproteobacteria</taxon>
        <taxon>Magnetococcales</taxon>
        <taxon>Magnetococcaceae</taxon>
        <taxon>Magnetococcus</taxon>
    </lineage>
</organism>
<comment type="similarity">
    <text evidence="1">Belongs to the UPF0246 family.</text>
</comment>
<protein>
    <recommendedName>
        <fullName evidence="1">UPF0246 protein Mmc1_3117</fullName>
    </recommendedName>
</protein>
<feature type="chain" id="PRO_1000061614" description="UPF0246 protein Mmc1_3117">
    <location>
        <begin position="1"/>
        <end position="257"/>
    </location>
</feature>
<sequence>MLAVLSPAKKLDETLHPSARLHTLPELLPHTQNLIEQLRGYDAAQLAHLMKLSPTLAELNVQRYQAFHFPFTPANAKAALFMFQGDTYVGLQAGSMDEQALLFAQQHLRILSGLYGVLRPLDLIQPYRLEMGTALVNGRGKDLYAYWGEHLVERLNAASESHGERTLINLASIEYFKGVKRAKLAGALITPIFKEVKGGEAKVIGLMAKRARGMMARYMINQRLESPEPLKTFNQGGYVYQPKLSTAEQWVFTRSAA</sequence>
<keyword id="KW-1185">Reference proteome</keyword>
<dbReference type="EMBL" id="CP000471">
    <property type="protein sequence ID" value="ABK45607.1"/>
    <property type="molecule type" value="Genomic_DNA"/>
</dbReference>
<dbReference type="RefSeq" id="WP_011714670.1">
    <property type="nucleotide sequence ID" value="NC_008576.1"/>
</dbReference>
<dbReference type="SMR" id="A0LCB4"/>
<dbReference type="STRING" id="156889.Mmc1_3117"/>
<dbReference type="KEGG" id="mgm:Mmc1_3117"/>
<dbReference type="eggNOG" id="COG3022">
    <property type="taxonomic scope" value="Bacteria"/>
</dbReference>
<dbReference type="HOGENOM" id="CLU_061989_0_0_5"/>
<dbReference type="OrthoDB" id="9777133at2"/>
<dbReference type="Proteomes" id="UP000002586">
    <property type="component" value="Chromosome"/>
</dbReference>
<dbReference type="GO" id="GO:0005829">
    <property type="term" value="C:cytosol"/>
    <property type="evidence" value="ECO:0007669"/>
    <property type="project" value="TreeGrafter"/>
</dbReference>
<dbReference type="GO" id="GO:0033194">
    <property type="term" value="P:response to hydroperoxide"/>
    <property type="evidence" value="ECO:0007669"/>
    <property type="project" value="TreeGrafter"/>
</dbReference>
<dbReference type="HAMAP" id="MF_00652">
    <property type="entry name" value="UPF0246"/>
    <property type="match status" value="1"/>
</dbReference>
<dbReference type="InterPro" id="IPR005583">
    <property type="entry name" value="YaaA"/>
</dbReference>
<dbReference type="NCBIfam" id="NF002542">
    <property type="entry name" value="PRK02101.1-3"/>
    <property type="match status" value="1"/>
</dbReference>
<dbReference type="PANTHER" id="PTHR30283:SF4">
    <property type="entry name" value="PEROXIDE STRESS RESISTANCE PROTEIN YAAA"/>
    <property type="match status" value="1"/>
</dbReference>
<dbReference type="PANTHER" id="PTHR30283">
    <property type="entry name" value="PEROXIDE STRESS RESPONSE PROTEIN YAAA"/>
    <property type="match status" value="1"/>
</dbReference>
<dbReference type="Pfam" id="PF03883">
    <property type="entry name" value="H2O2_YaaD"/>
    <property type="match status" value="1"/>
</dbReference>